<organism>
    <name type="scientific">Mus musculus</name>
    <name type="common">Mouse</name>
    <dbReference type="NCBI Taxonomy" id="10090"/>
    <lineage>
        <taxon>Eukaryota</taxon>
        <taxon>Metazoa</taxon>
        <taxon>Chordata</taxon>
        <taxon>Craniata</taxon>
        <taxon>Vertebrata</taxon>
        <taxon>Euteleostomi</taxon>
        <taxon>Mammalia</taxon>
        <taxon>Eutheria</taxon>
        <taxon>Euarchontoglires</taxon>
        <taxon>Glires</taxon>
        <taxon>Rodentia</taxon>
        <taxon>Myomorpha</taxon>
        <taxon>Muroidea</taxon>
        <taxon>Muridae</taxon>
        <taxon>Murinae</taxon>
        <taxon>Mus</taxon>
        <taxon>Mus</taxon>
    </lineage>
</organism>
<keyword id="KW-0002">3D-structure</keyword>
<keyword id="KW-0025">Alternative splicing</keyword>
<keyword id="KW-0129">CBS domain</keyword>
<keyword id="KW-1003">Cell membrane</keyword>
<keyword id="KW-0903">Direct protein sequencing</keyword>
<keyword id="KW-0325">Glycoprotein</keyword>
<keyword id="KW-0406">Ion transport</keyword>
<keyword id="KW-0472">Membrane</keyword>
<keyword id="KW-0597">Phosphoprotein</keyword>
<keyword id="KW-1185">Reference proteome</keyword>
<keyword id="KW-0677">Repeat</keyword>
<keyword id="KW-0812">Transmembrane</keyword>
<keyword id="KW-1133">Transmembrane helix</keyword>
<keyword id="KW-0813">Transport</keyword>
<comment type="function">
    <text evidence="7">Divalent metal cation transporter. Mediates transport of divalent metal cations in an order of Mg(2+) &gt; Co(2+) &gt; Mn(2+) &gt; Sr(2+) &gt; Ba(2+) &gt; Cu(2+) &gt; Fe(2+).</text>
</comment>
<comment type="subunit">
    <text>Isoform 1 and isoform 2 may interact with each other.</text>
</comment>
<comment type="subcellular location">
    <subcellularLocation>
        <location evidence="9">Cell membrane</location>
        <topology evidence="9">Multi-pass membrane protein</topology>
    </subcellularLocation>
</comment>
<comment type="alternative products">
    <event type="alternative splicing"/>
    <isoform>
        <id>Q3TWN3-1</id>
        <name>1</name>
        <name>CNNM2a</name>
        <sequence type="displayed"/>
    </isoform>
    <isoform>
        <id>Q3TWN3-2</id>
        <name>2</name>
        <name>CNNM2b</name>
        <sequence type="described" ref="VSP_027081"/>
    </isoform>
</comment>
<comment type="tissue specificity">
    <text evidence="6 7 9">Widely expressed, with highest levels in kidney, lung, spleen and testis. In the kidney, predominantly expressed in the distal convoluted tubule and, at lower levels, in the connecting tubule (at protein level).</text>
</comment>
<comment type="induction">
    <text evidence="7">By low Mg(2+) concentration.</text>
</comment>
<comment type="PTM">
    <text evidence="9">The N-terminus is cleaved within the endoplasmic reticulum. The signal peptidase complex seems to be involved in the processing, but the exact cleavage site has not been identified (PubMed:22399287).</text>
</comment>
<comment type="miscellaneous">
    <text>Shares weak sequence similarity with the cyclin family, hence its name. However, it has no cyclin-like function in vivo.</text>
</comment>
<comment type="similarity">
    <text evidence="11">Belongs to the ACDP family.</text>
</comment>
<comment type="sequence caution" evidence="11">
    <conflict type="erroneous initiation">
        <sequence resource="EMBL-CDS" id="AAF86373"/>
    </conflict>
    <text>Truncated N-terminus.</text>
</comment>
<comment type="sequence caution" evidence="11">
    <conflict type="miscellaneous discrepancy">
        <sequence resource="EMBL-CDS" id="AAH27387"/>
    </conflict>
    <text>Contaminating sequence. Potential poly-A sequence.</text>
</comment>
<comment type="sequence caution" evidence="11">
    <conflict type="erroneous initiation">
        <sequence resource="EMBL-CDS" id="AAH52513"/>
    </conflict>
    <text>Truncated N-terminus.</text>
</comment>
<gene>
    <name type="primary">Cnnm2</name>
    <name type="synonym">Acdp2</name>
</gene>
<name>CNNM2_MOUSE</name>
<feature type="chain" id="PRO_0000295761" description="Metal transporter CNNM2">
    <location>
        <begin position="1"/>
        <end position="875"/>
    </location>
</feature>
<feature type="topological domain" description="Extracellular" evidence="2">
    <location>
        <begin position="1"/>
        <end position="250"/>
    </location>
</feature>
<feature type="transmembrane region" description="Helical" evidence="2">
    <location>
        <begin position="251"/>
        <end position="271"/>
    </location>
</feature>
<feature type="topological domain" description="Cytoplasmic" evidence="2">
    <location>
        <begin position="272"/>
        <end position="313"/>
    </location>
</feature>
<feature type="intramembrane region" description="Helical" evidence="2">
    <location>
        <begin position="314"/>
        <end position="334"/>
    </location>
</feature>
<feature type="topological domain" description="Cytoplasmic" evidence="2">
    <location>
        <begin position="335"/>
        <end position="338"/>
    </location>
</feature>
<feature type="transmembrane region" description="Helical" evidence="2">
    <location>
        <begin position="339"/>
        <end position="359"/>
    </location>
</feature>
<feature type="topological domain" description="Extracellular" evidence="2">
    <location>
        <begin position="360"/>
        <end position="368"/>
    </location>
</feature>
<feature type="transmembrane region" description="Helical" evidence="2">
    <location>
        <begin position="369"/>
        <end position="389"/>
    </location>
</feature>
<feature type="topological domain" description="Cytoplasmic" evidence="2">
    <location>
        <begin position="390"/>
        <end position="875"/>
    </location>
</feature>
<feature type="domain" description="CNNM transmembrane" evidence="4">
    <location>
        <begin position="251"/>
        <end position="431"/>
    </location>
</feature>
<feature type="domain" description="CBS 1" evidence="3">
    <location>
        <begin position="450"/>
        <end position="511"/>
    </location>
</feature>
<feature type="domain" description="CBS 2" evidence="3">
    <location>
        <begin position="518"/>
        <end position="584"/>
    </location>
</feature>
<feature type="region of interest" description="Disordered" evidence="5">
    <location>
        <begin position="121"/>
        <end position="149"/>
    </location>
</feature>
<feature type="region of interest" description="Disordered" evidence="5">
    <location>
        <begin position="741"/>
        <end position="763"/>
    </location>
</feature>
<feature type="modified residue" description="Phosphoserine" evidence="1">
    <location>
        <position position="761"/>
    </location>
</feature>
<feature type="glycosylation site" description="N-linked (GlcNAc...) asparagine" evidence="8 9">
    <location>
        <position position="112"/>
    </location>
</feature>
<feature type="splice variant" id="VSP_027081" description="In isoform 2." evidence="10">
    <location>
        <begin position="721"/>
        <end position="742"/>
    </location>
</feature>
<feature type="mutagenesis site" description="Impairs N-terminal cleavage." evidence="9">
    <original>GCTA</original>
    <variation>LLLV</variation>
    <location>
        <begin position="62"/>
        <end position="65"/>
    </location>
</feature>
<feature type="mutagenesis site" description="No effect on N-terminal cleavage.">
    <original>GCT</original>
    <variation>LCL</variation>
    <location>
        <begin position="62"/>
        <end position="64"/>
    </location>
</feature>
<feature type="mutagenesis site" description="No effect on N-terminal cleavage.">
    <original>CTA</original>
    <variation>LTV</variation>
    <location>
        <begin position="63"/>
        <end position="65"/>
    </location>
</feature>
<feature type="mutagenesis site" description="Loss of N-glycosylation; 90% decrease of plasma membrane expression." evidence="9">
    <original>N</original>
    <variation>A</variation>
    <location>
        <position position="112"/>
    </location>
</feature>
<feature type="mutagenesis site" description="No effect on N-glycosylation." evidence="9">
    <original>N</original>
    <variation>A</variation>
    <location>
        <position position="327"/>
    </location>
</feature>
<feature type="mutagenesis site" description="No effect on N-glycosylation." evidence="9">
    <original>N</original>
    <variation>A</variation>
    <location>
        <position position="527"/>
    </location>
</feature>
<feature type="mutagenesis site" description="No effect on N-glycosylation." evidence="9">
    <original>N</original>
    <variation>A</variation>
    <location>
        <position position="591"/>
    </location>
</feature>
<feature type="sequence conflict" description="In Ref. 1; BAC31904 and 2; AAH27387." evidence="11" ref="1 2">
    <original>S</original>
    <variation>G</variation>
    <location>
        <position position="131"/>
    </location>
</feature>
<feature type="sequence conflict" description="In Ref. 1; BAE35233." evidence="11" ref="1">
    <original>Y</original>
    <variation>C</variation>
    <location>
        <position position="664"/>
    </location>
</feature>
<feature type="helix" evidence="13">
    <location>
        <begin position="430"/>
        <end position="440"/>
    </location>
</feature>
<feature type="turn" evidence="13">
    <location>
        <begin position="441"/>
        <end position="443"/>
    </location>
</feature>
<feature type="helix" evidence="13">
    <location>
        <begin position="446"/>
        <end position="449"/>
    </location>
</feature>
<feature type="strand" evidence="13">
    <location>
        <begin position="450"/>
        <end position="452"/>
    </location>
</feature>
<feature type="helix" evidence="13">
    <location>
        <begin position="453"/>
        <end position="455"/>
    </location>
</feature>
<feature type="strand" evidence="12">
    <location>
        <begin position="464"/>
        <end position="466"/>
    </location>
</feature>
<feature type="helix" evidence="13">
    <location>
        <begin position="467"/>
        <end position="476"/>
    </location>
</feature>
<feature type="strand" evidence="13">
    <location>
        <begin position="479"/>
        <end position="487"/>
    </location>
</feature>
<feature type="strand" evidence="13">
    <location>
        <begin position="491"/>
        <end position="496"/>
    </location>
</feature>
<feature type="helix" evidence="13">
    <location>
        <begin position="497"/>
        <end position="500"/>
    </location>
</feature>
<feature type="helix" evidence="13">
    <location>
        <begin position="505"/>
        <end position="507"/>
    </location>
</feature>
<feature type="helix" evidence="13">
    <location>
        <begin position="511"/>
        <end position="517"/>
    </location>
</feature>
<feature type="strand" evidence="13">
    <location>
        <begin position="523"/>
        <end position="526"/>
    </location>
</feature>
<feature type="helix" evidence="13">
    <location>
        <begin position="531"/>
        <end position="540"/>
    </location>
</feature>
<feature type="strand" evidence="13">
    <location>
        <begin position="545"/>
        <end position="552"/>
    </location>
</feature>
<feature type="strand" evidence="13">
    <location>
        <begin position="555"/>
        <end position="557"/>
    </location>
</feature>
<feature type="strand" evidence="13">
    <location>
        <begin position="560"/>
        <end position="568"/>
    </location>
</feature>
<feature type="helix" evidence="13">
    <location>
        <begin position="569"/>
        <end position="577"/>
    </location>
</feature>
<sequence>MIGCGACEPEVKMAGGQAAAALPTWKMAARRSLSARGRGVLQAAAGRLLPLLLLSCCWGAGGCTAAGENEETVIIGLRLEDTNDVSFMEGGALRVSERTRVKLRVYGQNINNETWSRIAFTEHERRRHTPSERGLGGPAPPEPDSGPQRCGIRTSDIIILPHIILNRRTSGIIEIEIKPLRKMEKSKSYYLCTSLSTPALGAGGSGSASGTVGGKGGAGVAGLPPPPWAETTWIYHDGEDTKMIVGEEKKFLLPFWLQVIFISLLLCLSGMFSGLNLGLMALDPMELRIVQNCGTEKEKNYAKRIEPVRRQGNYLLCSLLLGNVLVNTTLTILLDDIAGSGLVAVVVSTIGIVIFGEIVPQAICSRHGLAVGANTIFLTKFFMMMTFPASYPVSKLLDCVLGQEIGTVYNREKLLEMLRVTDPYNDLVKEELNIIQGALELRTKTVEDVMTPLRDCFMITGEAILDFNTMSEIMESGYTRIPVFEGERSNIVDLLFVKDLAFVDPDDCTPLKTITKFYNHPLHFVFNDTKLDAMLEEFKKGKSHLAIVQRVNNEGEGDPFYEVLGIVTLEDVIEEIIKSEILDETDLYTDNRTKKKVAHRERKQDFSAFKQTDSEMKVKISPQLLLAMHRFLATEVEAFSPSQMSEKILLRLLKHPNVIQELKYDEKNKKAPECYLYQRNKPVDYFVLILQGKVEVEAGKEGMKFEASAFSYYGVMALTASPVPLSLSRTFVVSRTEVLAAGSPGENKSPPRPCGLNHSDSLSRSDRIDAMTPTLGSSNNQLSSSFLQVYIPDYSVRALSDLQFVKISRQQYQNALMASRMDKTPQSSDSENTKIELTLTELHDGLPDETANLLNEQNCVSHNKANHSLHSEGAI</sequence>
<dbReference type="EMBL" id="AK044400">
    <property type="protein sequence ID" value="BAC31904.1"/>
    <property type="molecule type" value="mRNA"/>
</dbReference>
<dbReference type="EMBL" id="AK159616">
    <property type="protein sequence ID" value="BAE35233.1"/>
    <property type="molecule type" value="mRNA"/>
</dbReference>
<dbReference type="EMBL" id="AC122442">
    <property type="status" value="NOT_ANNOTATED_CDS"/>
    <property type="molecule type" value="Genomic_DNA"/>
</dbReference>
<dbReference type="EMBL" id="AC161865">
    <property type="status" value="NOT_ANNOTATED_CDS"/>
    <property type="molecule type" value="Genomic_DNA"/>
</dbReference>
<dbReference type="EMBL" id="BC027387">
    <property type="protein sequence ID" value="AAH27387.1"/>
    <property type="status" value="ALT_SEQ"/>
    <property type="molecule type" value="mRNA"/>
</dbReference>
<dbReference type="EMBL" id="BC052513">
    <property type="protein sequence ID" value="AAH52513.1"/>
    <property type="status" value="ALT_INIT"/>
    <property type="molecule type" value="mRNA"/>
</dbReference>
<dbReference type="EMBL" id="AF216961">
    <property type="protein sequence ID" value="AAF86373.1"/>
    <property type="status" value="ALT_INIT"/>
    <property type="molecule type" value="mRNA"/>
</dbReference>
<dbReference type="CCDS" id="CCDS50459.1">
    <molecule id="Q3TWN3-1"/>
</dbReference>
<dbReference type="CCDS" id="CCDS50460.1">
    <molecule id="Q3TWN3-2"/>
</dbReference>
<dbReference type="RefSeq" id="NP_001095941.1">
    <molecule id="Q3TWN3-2"/>
    <property type="nucleotide sequence ID" value="NM_001102471.1"/>
</dbReference>
<dbReference type="RefSeq" id="NP_291047.2">
    <molecule id="Q3TWN3-1"/>
    <property type="nucleotide sequence ID" value="NM_033569.3"/>
</dbReference>
<dbReference type="PDB" id="4P1G">
    <property type="method" value="X-ray"/>
    <property type="resolution" value="2.60 A"/>
    <property type="chains" value="A=430-580"/>
</dbReference>
<dbReference type="PDB" id="4P1O">
    <property type="method" value="X-ray"/>
    <property type="resolution" value="3.06 A"/>
    <property type="chains" value="A/B=430-580"/>
</dbReference>
<dbReference type="PDB" id="5LXQ">
    <property type="method" value="X-ray"/>
    <property type="resolution" value="3.33 A"/>
    <property type="chains" value="A/H=430-584"/>
</dbReference>
<dbReference type="PDB" id="5MMZ">
    <property type="method" value="X-ray"/>
    <property type="resolution" value="2.40 A"/>
    <property type="chains" value="A=430-584"/>
</dbReference>
<dbReference type="PDB" id="6WUS">
    <property type="method" value="X-ray"/>
    <property type="resolution" value="2.76 A"/>
    <property type="chains" value="A=430-580"/>
</dbReference>
<dbReference type="PDBsum" id="4P1G"/>
<dbReference type="PDBsum" id="4P1O"/>
<dbReference type="PDBsum" id="5LXQ"/>
<dbReference type="PDBsum" id="5MMZ"/>
<dbReference type="PDBsum" id="6WUS"/>
<dbReference type="SMR" id="Q3TWN3"/>
<dbReference type="BioGRID" id="220476">
    <property type="interactions" value="1"/>
</dbReference>
<dbReference type="FunCoup" id="Q3TWN3">
    <property type="interactions" value="387"/>
</dbReference>
<dbReference type="STRING" id="10090.ENSMUSP00000096972"/>
<dbReference type="TCDB" id="1.A.112.1.1">
    <property type="family name" value="the cyclin m mg2+ exporter (cnnm) family"/>
</dbReference>
<dbReference type="GlyCosmos" id="Q3TWN3">
    <property type="glycosylation" value="1 site, No reported glycans"/>
</dbReference>
<dbReference type="GlyGen" id="Q3TWN3">
    <property type="glycosylation" value="3 sites, 3 N-linked glycans (3 sites)"/>
</dbReference>
<dbReference type="iPTMnet" id="Q3TWN3"/>
<dbReference type="PhosphoSitePlus" id="Q3TWN3"/>
<dbReference type="SwissPalm" id="Q3TWN3"/>
<dbReference type="PaxDb" id="10090-ENSMUSP00000096972"/>
<dbReference type="PeptideAtlas" id="Q3TWN3"/>
<dbReference type="ProteomicsDB" id="283454">
    <molecule id="Q3TWN3-1"/>
</dbReference>
<dbReference type="ProteomicsDB" id="283455">
    <molecule id="Q3TWN3-2"/>
</dbReference>
<dbReference type="Pumba" id="Q3TWN3"/>
<dbReference type="Antibodypedia" id="46052">
    <property type="antibodies" value="154 antibodies from 22 providers"/>
</dbReference>
<dbReference type="DNASU" id="94219"/>
<dbReference type="Ensembl" id="ENSMUST00000077666.6">
    <molecule id="Q3TWN3-2"/>
    <property type="protein sequence ID" value="ENSMUSP00000076850.5"/>
    <property type="gene ID" value="ENSMUSG00000064105.14"/>
</dbReference>
<dbReference type="Ensembl" id="ENSMUST00000099373.12">
    <molecule id="Q3TWN3-1"/>
    <property type="protein sequence ID" value="ENSMUSP00000096972.5"/>
    <property type="gene ID" value="ENSMUSG00000064105.14"/>
</dbReference>
<dbReference type="GeneID" id="94219"/>
<dbReference type="KEGG" id="mmu:94219"/>
<dbReference type="UCSC" id="uc008hue.1">
    <molecule id="Q3TWN3-1"/>
    <property type="organism name" value="mouse"/>
</dbReference>
<dbReference type="UCSC" id="uc008huf.1">
    <molecule id="Q3TWN3-2"/>
    <property type="organism name" value="mouse"/>
</dbReference>
<dbReference type="AGR" id="MGI:2151054"/>
<dbReference type="CTD" id="54805"/>
<dbReference type="MGI" id="MGI:2151054">
    <property type="gene designation" value="Cnnm2"/>
</dbReference>
<dbReference type="VEuPathDB" id="HostDB:ENSMUSG00000064105"/>
<dbReference type="eggNOG" id="KOG2118">
    <property type="taxonomic scope" value="Eukaryota"/>
</dbReference>
<dbReference type="GeneTree" id="ENSGT00940000159034"/>
<dbReference type="HOGENOM" id="CLU_011310_1_1_1"/>
<dbReference type="InParanoid" id="Q3TWN3"/>
<dbReference type="OMA" id="MLEHYLF"/>
<dbReference type="OrthoDB" id="5353557at2759"/>
<dbReference type="PhylomeDB" id="Q3TWN3"/>
<dbReference type="TreeFam" id="TF101012"/>
<dbReference type="BRENDA" id="4.2.1.22">
    <property type="organism ID" value="3474"/>
</dbReference>
<dbReference type="BioGRID-ORCS" id="94219">
    <property type="hits" value="0 hits in 78 CRISPR screens"/>
</dbReference>
<dbReference type="ChiTaRS" id="Cnnm2">
    <property type="organism name" value="mouse"/>
</dbReference>
<dbReference type="EvolutionaryTrace" id="Q3TWN3"/>
<dbReference type="PRO" id="PR:Q3TWN3"/>
<dbReference type="Proteomes" id="UP000000589">
    <property type="component" value="Chromosome 19"/>
</dbReference>
<dbReference type="RNAct" id="Q3TWN3">
    <property type="molecule type" value="protein"/>
</dbReference>
<dbReference type="Bgee" id="ENSMUSG00000064105">
    <property type="expression patterns" value="Expressed in animal zygote and 194 other cell types or tissues"/>
</dbReference>
<dbReference type="GO" id="GO:0016323">
    <property type="term" value="C:basolateral plasma membrane"/>
    <property type="evidence" value="ECO:0000314"/>
    <property type="project" value="MGI"/>
</dbReference>
<dbReference type="GO" id="GO:0098978">
    <property type="term" value="C:glutamatergic synapse"/>
    <property type="evidence" value="ECO:0000314"/>
    <property type="project" value="SynGO"/>
</dbReference>
<dbReference type="GO" id="GO:0005886">
    <property type="term" value="C:plasma membrane"/>
    <property type="evidence" value="ECO:0000314"/>
    <property type="project" value="MGI"/>
</dbReference>
<dbReference type="GO" id="GO:0045202">
    <property type="term" value="C:synapse"/>
    <property type="evidence" value="ECO:0000314"/>
    <property type="project" value="SynGO"/>
</dbReference>
<dbReference type="GO" id="GO:0005524">
    <property type="term" value="F:ATP binding"/>
    <property type="evidence" value="ECO:0000314"/>
    <property type="project" value="MGI"/>
</dbReference>
<dbReference type="GO" id="GO:0015095">
    <property type="term" value="F:magnesium ion transmembrane transporter activity"/>
    <property type="evidence" value="ECO:0000314"/>
    <property type="project" value="MGI"/>
</dbReference>
<dbReference type="GO" id="GO:0010960">
    <property type="term" value="P:magnesium ion homeostasis"/>
    <property type="evidence" value="ECO:0000266"/>
    <property type="project" value="MGI"/>
</dbReference>
<dbReference type="GO" id="GO:0015693">
    <property type="term" value="P:magnesium ion transport"/>
    <property type="evidence" value="ECO:0000314"/>
    <property type="project" value="MGI"/>
</dbReference>
<dbReference type="CDD" id="cd04590">
    <property type="entry name" value="CBS_pair_CorC_HlyC_assoc"/>
    <property type="match status" value="1"/>
</dbReference>
<dbReference type="FunFam" id="3.10.580.10:FF:000001">
    <property type="entry name" value="Putative metal transporter CNNM3 isoform 2"/>
    <property type="match status" value="1"/>
</dbReference>
<dbReference type="Gene3D" id="3.10.580.10">
    <property type="entry name" value="CBS-domain"/>
    <property type="match status" value="1"/>
</dbReference>
<dbReference type="Gene3D" id="2.60.120.10">
    <property type="entry name" value="Jelly Rolls"/>
    <property type="match status" value="1"/>
</dbReference>
<dbReference type="InterPro" id="IPR045095">
    <property type="entry name" value="ACDP"/>
</dbReference>
<dbReference type="InterPro" id="IPR000644">
    <property type="entry name" value="CBS_dom"/>
</dbReference>
<dbReference type="InterPro" id="IPR046342">
    <property type="entry name" value="CBS_dom_sf"/>
</dbReference>
<dbReference type="InterPro" id="IPR002550">
    <property type="entry name" value="CNNM"/>
</dbReference>
<dbReference type="InterPro" id="IPR044751">
    <property type="entry name" value="Ion_transp-like_CBS"/>
</dbReference>
<dbReference type="InterPro" id="IPR014710">
    <property type="entry name" value="RmlC-like_jellyroll"/>
</dbReference>
<dbReference type="PANTHER" id="PTHR12064">
    <property type="entry name" value="METAL TRANSPORTER CNNM"/>
    <property type="match status" value="1"/>
</dbReference>
<dbReference type="PANTHER" id="PTHR12064:SF22">
    <property type="entry name" value="METAL TRANSPORTER CNNM2"/>
    <property type="match status" value="1"/>
</dbReference>
<dbReference type="Pfam" id="PF00571">
    <property type="entry name" value="CBS"/>
    <property type="match status" value="1"/>
</dbReference>
<dbReference type="Pfam" id="PF01595">
    <property type="entry name" value="CNNM"/>
    <property type="match status" value="1"/>
</dbReference>
<dbReference type="Pfam" id="PF25511">
    <property type="entry name" value="Ig_CNNM4_N"/>
    <property type="match status" value="1"/>
</dbReference>
<dbReference type="SUPFAM" id="SSF54631">
    <property type="entry name" value="CBS-domain pair"/>
    <property type="match status" value="1"/>
</dbReference>
<dbReference type="PROSITE" id="PS51371">
    <property type="entry name" value="CBS"/>
    <property type="match status" value="2"/>
</dbReference>
<dbReference type="PROSITE" id="PS51846">
    <property type="entry name" value="CNNM"/>
    <property type="match status" value="1"/>
</dbReference>
<evidence type="ECO:0000250" key="1">
    <source>
        <dbReference type="UniProtKB" id="Q9H8M5"/>
    </source>
</evidence>
<evidence type="ECO:0000255" key="2"/>
<evidence type="ECO:0000255" key="3">
    <source>
        <dbReference type="PROSITE-ProRule" id="PRU00703"/>
    </source>
</evidence>
<evidence type="ECO:0000255" key="4">
    <source>
        <dbReference type="PROSITE-ProRule" id="PRU01193"/>
    </source>
</evidence>
<evidence type="ECO:0000256" key="5">
    <source>
        <dbReference type="SAM" id="MobiDB-lite"/>
    </source>
</evidence>
<evidence type="ECO:0000269" key="6">
    <source>
    </source>
</evidence>
<evidence type="ECO:0000269" key="7">
    <source>
    </source>
</evidence>
<evidence type="ECO:0000269" key="8">
    <source>
    </source>
</evidence>
<evidence type="ECO:0000269" key="9">
    <source>
    </source>
</evidence>
<evidence type="ECO:0000303" key="10">
    <source>
    </source>
</evidence>
<evidence type="ECO:0000305" key="11"/>
<evidence type="ECO:0007829" key="12">
    <source>
        <dbReference type="PDB" id="4P1G"/>
    </source>
</evidence>
<evidence type="ECO:0007829" key="13">
    <source>
        <dbReference type="PDB" id="5MMZ"/>
    </source>
</evidence>
<protein>
    <recommendedName>
        <fullName>Metal transporter CNNM2</fullName>
    </recommendedName>
    <alternativeName>
        <fullName>Ancient conserved domain-containing protein 2</fullName>
        <shortName>mACDP2</shortName>
    </alternativeName>
    <alternativeName>
        <fullName>Cyclin-M2</fullName>
    </alternativeName>
</protein>
<accession>Q3TWN3</accession>
<accession>A0PJF1</accession>
<accession>E9PUH1</accession>
<accession>Q7TT07</accession>
<accession>Q8C8V4</accession>
<accession>Q9JIM8</accession>
<proteinExistence type="evidence at protein level"/>
<reference key="1">
    <citation type="journal article" date="2005" name="Science">
        <title>The transcriptional landscape of the mammalian genome.</title>
        <authorList>
            <person name="Carninci P."/>
            <person name="Kasukawa T."/>
            <person name="Katayama S."/>
            <person name="Gough J."/>
            <person name="Frith M.C."/>
            <person name="Maeda N."/>
            <person name="Oyama R."/>
            <person name="Ravasi T."/>
            <person name="Lenhard B."/>
            <person name="Wells C."/>
            <person name="Kodzius R."/>
            <person name="Shimokawa K."/>
            <person name="Bajic V.B."/>
            <person name="Brenner S.E."/>
            <person name="Batalov S."/>
            <person name="Forrest A.R."/>
            <person name="Zavolan M."/>
            <person name="Davis M.J."/>
            <person name="Wilming L.G."/>
            <person name="Aidinis V."/>
            <person name="Allen J.E."/>
            <person name="Ambesi-Impiombato A."/>
            <person name="Apweiler R."/>
            <person name="Aturaliya R.N."/>
            <person name="Bailey T.L."/>
            <person name="Bansal M."/>
            <person name="Baxter L."/>
            <person name="Beisel K.W."/>
            <person name="Bersano T."/>
            <person name="Bono H."/>
            <person name="Chalk A.M."/>
            <person name="Chiu K.P."/>
            <person name="Choudhary V."/>
            <person name="Christoffels A."/>
            <person name="Clutterbuck D.R."/>
            <person name="Crowe M.L."/>
            <person name="Dalla E."/>
            <person name="Dalrymple B.P."/>
            <person name="de Bono B."/>
            <person name="Della Gatta G."/>
            <person name="di Bernardo D."/>
            <person name="Down T."/>
            <person name="Engstrom P."/>
            <person name="Fagiolini M."/>
            <person name="Faulkner G."/>
            <person name="Fletcher C.F."/>
            <person name="Fukushima T."/>
            <person name="Furuno M."/>
            <person name="Futaki S."/>
            <person name="Gariboldi M."/>
            <person name="Georgii-Hemming P."/>
            <person name="Gingeras T.R."/>
            <person name="Gojobori T."/>
            <person name="Green R.E."/>
            <person name="Gustincich S."/>
            <person name="Harbers M."/>
            <person name="Hayashi Y."/>
            <person name="Hensch T.K."/>
            <person name="Hirokawa N."/>
            <person name="Hill D."/>
            <person name="Huminiecki L."/>
            <person name="Iacono M."/>
            <person name="Ikeo K."/>
            <person name="Iwama A."/>
            <person name="Ishikawa T."/>
            <person name="Jakt M."/>
            <person name="Kanapin A."/>
            <person name="Katoh M."/>
            <person name="Kawasawa Y."/>
            <person name="Kelso J."/>
            <person name="Kitamura H."/>
            <person name="Kitano H."/>
            <person name="Kollias G."/>
            <person name="Krishnan S.P."/>
            <person name="Kruger A."/>
            <person name="Kummerfeld S.K."/>
            <person name="Kurochkin I.V."/>
            <person name="Lareau L.F."/>
            <person name="Lazarevic D."/>
            <person name="Lipovich L."/>
            <person name="Liu J."/>
            <person name="Liuni S."/>
            <person name="McWilliam S."/>
            <person name="Madan Babu M."/>
            <person name="Madera M."/>
            <person name="Marchionni L."/>
            <person name="Matsuda H."/>
            <person name="Matsuzawa S."/>
            <person name="Miki H."/>
            <person name="Mignone F."/>
            <person name="Miyake S."/>
            <person name="Morris K."/>
            <person name="Mottagui-Tabar S."/>
            <person name="Mulder N."/>
            <person name="Nakano N."/>
            <person name="Nakauchi H."/>
            <person name="Ng P."/>
            <person name="Nilsson R."/>
            <person name="Nishiguchi S."/>
            <person name="Nishikawa S."/>
            <person name="Nori F."/>
            <person name="Ohara O."/>
            <person name="Okazaki Y."/>
            <person name="Orlando V."/>
            <person name="Pang K.C."/>
            <person name="Pavan W.J."/>
            <person name="Pavesi G."/>
            <person name="Pesole G."/>
            <person name="Petrovsky N."/>
            <person name="Piazza S."/>
            <person name="Reed J."/>
            <person name="Reid J.F."/>
            <person name="Ring B.Z."/>
            <person name="Ringwald M."/>
            <person name="Rost B."/>
            <person name="Ruan Y."/>
            <person name="Salzberg S.L."/>
            <person name="Sandelin A."/>
            <person name="Schneider C."/>
            <person name="Schoenbach C."/>
            <person name="Sekiguchi K."/>
            <person name="Semple C.A."/>
            <person name="Seno S."/>
            <person name="Sessa L."/>
            <person name="Sheng Y."/>
            <person name="Shibata Y."/>
            <person name="Shimada H."/>
            <person name="Shimada K."/>
            <person name="Silva D."/>
            <person name="Sinclair B."/>
            <person name="Sperling S."/>
            <person name="Stupka E."/>
            <person name="Sugiura K."/>
            <person name="Sultana R."/>
            <person name="Takenaka Y."/>
            <person name="Taki K."/>
            <person name="Tammoja K."/>
            <person name="Tan S.L."/>
            <person name="Tang S."/>
            <person name="Taylor M.S."/>
            <person name="Tegner J."/>
            <person name="Teichmann S.A."/>
            <person name="Ueda H.R."/>
            <person name="van Nimwegen E."/>
            <person name="Verardo R."/>
            <person name="Wei C.L."/>
            <person name="Yagi K."/>
            <person name="Yamanishi H."/>
            <person name="Zabarovsky E."/>
            <person name="Zhu S."/>
            <person name="Zimmer A."/>
            <person name="Hide W."/>
            <person name="Bult C."/>
            <person name="Grimmond S.M."/>
            <person name="Teasdale R.D."/>
            <person name="Liu E.T."/>
            <person name="Brusic V."/>
            <person name="Quackenbush J."/>
            <person name="Wahlestedt C."/>
            <person name="Mattick J.S."/>
            <person name="Hume D.A."/>
            <person name="Kai C."/>
            <person name="Sasaki D."/>
            <person name="Tomaru Y."/>
            <person name="Fukuda S."/>
            <person name="Kanamori-Katayama M."/>
            <person name="Suzuki M."/>
            <person name="Aoki J."/>
            <person name="Arakawa T."/>
            <person name="Iida J."/>
            <person name="Imamura K."/>
            <person name="Itoh M."/>
            <person name="Kato T."/>
            <person name="Kawaji H."/>
            <person name="Kawagashira N."/>
            <person name="Kawashima T."/>
            <person name="Kojima M."/>
            <person name="Kondo S."/>
            <person name="Konno H."/>
            <person name="Nakano K."/>
            <person name="Ninomiya N."/>
            <person name="Nishio T."/>
            <person name="Okada M."/>
            <person name="Plessy C."/>
            <person name="Shibata K."/>
            <person name="Shiraki T."/>
            <person name="Suzuki S."/>
            <person name="Tagami M."/>
            <person name="Waki K."/>
            <person name="Watahiki A."/>
            <person name="Okamura-Oho Y."/>
            <person name="Suzuki H."/>
            <person name="Kawai J."/>
            <person name="Hayashizaki Y."/>
        </authorList>
    </citation>
    <scope>NUCLEOTIDE SEQUENCE [LARGE SCALE MRNA] (ISOFORM 2)</scope>
    <source>
        <strain>C57BL/6J</strain>
        <tissue>Retina</tissue>
    </source>
</reference>
<reference key="2">
    <citation type="journal article" date="2009" name="PLoS Biol.">
        <title>Lineage-specific biology revealed by a finished genome assembly of the mouse.</title>
        <authorList>
            <person name="Church D.M."/>
            <person name="Goodstadt L."/>
            <person name="Hillier L.W."/>
            <person name="Zody M.C."/>
            <person name="Goldstein S."/>
            <person name="She X."/>
            <person name="Bult C.J."/>
            <person name="Agarwala R."/>
            <person name="Cherry J.L."/>
            <person name="DiCuccio M."/>
            <person name="Hlavina W."/>
            <person name="Kapustin Y."/>
            <person name="Meric P."/>
            <person name="Maglott D."/>
            <person name="Birtle Z."/>
            <person name="Marques A.C."/>
            <person name="Graves T."/>
            <person name="Zhou S."/>
            <person name="Teague B."/>
            <person name="Potamousis K."/>
            <person name="Churas C."/>
            <person name="Place M."/>
            <person name="Herschleb J."/>
            <person name="Runnheim R."/>
            <person name="Forrest D."/>
            <person name="Amos-Landgraf J."/>
            <person name="Schwartz D.C."/>
            <person name="Cheng Z."/>
            <person name="Lindblad-Toh K."/>
            <person name="Eichler E.E."/>
            <person name="Ponting C.P."/>
        </authorList>
    </citation>
    <scope>NUCLEOTIDE SEQUENCE [LARGE SCALE GENOMIC DNA]</scope>
    <source>
        <strain>C57BL/6J</strain>
    </source>
</reference>
<reference key="3">
    <citation type="journal article" date="2004" name="Genome Res.">
        <title>The status, quality, and expansion of the NIH full-length cDNA project: the Mammalian Gene Collection (MGC).</title>
        <authorList>
            <consortium name="The MGC Project Team"/>
        </authorList>
    </citation>
    <scope>NUCLEOTIDE SEQUENCE [LARGE SCALE MRNA] OF 14-875 (ISOFORM 1)</scope>
    <source>
        <strain>C57BL/6J</strain>
        <strain>FVB/N</strain>
        <tissue>Mammary gland</tissue>
        <tissue>Mammary tumor</tissue>
    </source>
</reference>
<reference key="4">
    <citation type="submission" date="2009-01" db="UniProtKB">
        <authorList>
            <person name="Lubec G."/>
            <person name="Sunyer B."/>
            <person name="Chen W.-Q."/>
        </authorList>
    </citation>
    <scope>PROTEIN SEQUENCE OF 27-36</scope>
    <scope>IDENTIFICATION BY MASS SPECTROMETRY</scope>
    <source>
        <strain>OF1</strain>
        <tissue>Hippocampus</tissue>
    </source>
</reference>
<reference key="5">
    <citation type="journal article" date="2004" name="BMC Genomics">
        <title>Molecular cloning and characterization of the mouse Acdp gene family.</title>
        <authorList>
            <person name="Wang C.-Y."/>
            <person name="Yang P."/>
            <person name="Shi J.-D."/>
            <person name="Purohit S."/>
            <person name="Guo D."/>
            <person name="An H."/>
            <person name="Gu J.-G."/>
            <person name="Ling J."/>
            <person name="Dong Z."/>
            <person name="She J.-X."/>
        </authorList>
    </citation>
    <scope>NUCLEOTIDE SEQUENCE [MRNA] OF 176-875 (ISOFORM 1)</scope>
    <scope>TISSUE SPECIFICITY</scope>
    <source>
        <tissue>Brain</tissue>
    </source>
</reference>
<reference key="6">
    <citation type="journal article" date="2005" name="Physiol. Genomics">
        <title>Functional characterization of ACDP2 (ancient conserved domain protein), a divalent metal transporter.</title>
        <authorList>
            <person name="Goytain A."/>
            <person name="Quamme G.A."/>
        </authorList>
    </citation>
    <scope>FUNCTION</scope>
    <scope>TISSUE SPECIFICITY</scope>
    <scope>INDUCTION</scope>
</reference>
<reference key="7">
    <citation type="journal article" date="2009" name="Nat. Biotechnol.">
        <title>Mass-spectrometric identification and relative quantification of N-linked cell surface glycoproteins.</title>
        <authorList>
            <person name="Wollscheid B."/>
            <person name="Bausch-Fluck D."/>
            <person name="Henderson C."/>
            <person name="O'Brien R."/>
            <person name="Bibel M."/>
            <person name="Schiess R."/>
            <person name="Aebersold R."/>
            <person name="Watts J.D."/>
        </authorList>
    </citation>
    <scope>GLYCOSYLATION [LARGE SCALE ANALYSIS] AT ASN-112</scope>
</reference>
<reference key="8">
    <citation type="journal article" date="2012" name="J. Biol. Chem.">
        <title>Membrane topology and intracellular processing of Cyclin M2 (CNNM2).</title>
        <authorList>
            <person name="de Baaij J.H."/>
            <person name="Stuiver M."/>
            <person name="Meij I.C."/>
            <person name="Lainez S."/>
            <person name="Kopplin K."/>
            <person name="Venselaar H."/>
            <person name="Mueller D."/>
            <person name="Bindels R.J."/>
            <person name="Hoenderop J.G."/>
        </authorList>
    </citation>
    <scope>DIMERIZATION</scope>
    <scope>SUBCELLULAR LOCATION</scope>
    <scope>TISSUE SPECIFICITY</scope>
    <scope>MEMBRANE TOPOLOGY</scope>
    <scope>MUTAGENESIS OF 62-GLY--ALA-65; ASN-112; ASN-327; ASN-527 AND ASN-591</scope>
    <scope>GLYCOSYLATION AT ASN-112</scope>
</reference>